<organism>
    <name type="scientific">Dechloromonas aromatica (strain RCB)</name>
    <dbReference type="NCBI Taxonomy" id="159087"/>
    <lineage>
        <taxon>Bacteria</taxon>
        <taxon>Pseudomonadati</taxon>
        <taxon>Pseudomonadota</taxon>
        <taxon>Betaproteobacteria</taxon>
        <taxon>Rhodocyclales</taxon>
        <taxon>Azonexaceae</taxon>
        <taxon>Dechloromonas</taxon>
    </lineage>
</organism>
<accession>Q47AA5</accession>
<proteinExistence type="inferred from homology"/>
<reference key="1">
    <citation type="journal article" date="2009" name="BMC Genomics">
        <title>Metabolic analysis of the soil microbe Dechloromonas aromatica str. RCB: indications of a surprisingly complex life-style and cryptic anaerobic pathways for aromatic degradation.</title>
        <authorList>
            <person name="Salinero K.K."/>
            <person name="Keller K."/>
            <person name="Feil W.S."/>
            <person name="Feil H."/>
            <person name="Trong S."/>
            <person name="Di Bartolo G."/>
            <person name="Lapidus A."/>
        </authorList>
    </citation>
    <scope>NUCLEOTIDE SEQUENCE [LARGE SCALE GENOMIC DNA]</scope>
    <source>
        <strain>RCB</strain>
    </source>
</reference>
<sequence>MKHKVKHIHFVGVGGSGMSGIAEVLAHLDFTVTGSDLAASATTRRLEGEGVKVTVGHAAENIAGADAVVISTAVKADNPEVIAARERKIPVVPRAQMLAELMRLKSGIAIAGTHGKTTTTSLVTSILAEGGIDPTFVIGGRLNAAGANARLGSGDFLVAEADESDASFLFLSPVISVVTNIDADHMETYGHDFERLKSAFVDFLNRLPFYGVAVVCGDDANIRDILPRVPKQIITYGLSNECNFHAENIVADNGQMRFDCVRVNGTTSRLSITLNTPGMHNVLNALAAIAVATEVQVSDAAIVKALAEFKGVGRRFQRYGEVALPAGGSFTLVDDYGHHPVEMAATLAAARGAFPGRRLVLAFQPHRYTRTRDCFEDFVKVLSTVDALCLAEIYAAGEAPIVAADGRSLARALRVSGKVEPVFVEDIAAMPQTIMDVARDGDVVLCMGAGSIGAVPGKVAEFK</sequence>
<gene>
    <name evidence="1" type="primary">murC</name>
    <name type="ordered locus">Daro_3497</name>
</gene>
<evidence type="ECO:0000255" key="1">
    <source>
        <dbReference type="HAMAP-Rule" id="MF_00046"/>
    </source>
</evidence>
<name>MURC_DECAR</name>
<comment type="function">
    <text evidence="1">Cell wall formation.</text>
</comment>
<comment type="catalytic activity">
    <reaction evidence="1">
        <text>UDP-N-acetyl-alpha-D-muramate + L-alanine + ATP = UDP-N-acetyl-alpha-D-muramoyl-L-alanine + ADP + phosphate + H(+)</text>
        <dbReference type="Rhea" id="RHEA:23372"/>
        <dbReference type="ChEBI" id="CHEBI:15378"/>
        <dbReference type="ChEBI" id="CHEBI:30616"/>
        <dbReference type="ChEBI" id="CHEBI:43474"/>
        <dbReference type="ChEBI" id="CHEBI:57972"/>
        <dbReference type="ChEBI" id="CHEBI:70757"/>
        <dbReference type="ChEBI" id="CHEBI:83898"/>
        <dbReference type="ChEBI" id="CHEBI:456216"/>
        <dbReference type="EC" id="6.3.2.8"/>
    </reaction>
</comment>
<comment type="pathway">
    <text evidence="1">Cell wall biogenesis; peptidoglycan biosynthesis.</text>
</comment>
<comment type="subcellular location">
    <subcellularLocation>
        <location evidence="1">Cytoplasm</location>
    </subcellularLocation>
</comment>
<comment type="similarity">
    <text evidence="1">Belongs to the MurCDEF family.</text>
</comment>
<dbReference type="EC" id="6.3.2.8" evidence="1"/>
<dbReference type="EMBL" id="CP000089">
    <property type="protein sequence ID" value="AAZ48226.1"/>
    <property type="molecule type" value="Genomic_DNA"/>
</dbReference>
<dbReference type="SMR" id="Q47AA5"/>
<dbReference type="STRING" id="159087.Daro_3497"/>
<dbReference type="KEGG" id="dar:Daro_3497"/>
<dbReference type="eggNOG" id="COG0773">
    <property type="taxonomic scope" value="Bacteria"/>
</dbReference>
<dbReference type="HOGENOM" id="CLU_028104_2_2_4"/>
<dbReference type="OrthoDB" id="9804126at2"/>
<dbReference type="UniPathway" id="UPA00219"/>
<dbReference type="GO" id="GO:0005737">
    <property type="term" value="C:cytoplasm"/>
    <property type="evidence" value="ECO:0007669"/>
    <property type="project" value="UniProtKB-SubCell"/>
</dbReference>
<dbReference type="GO" id="GO:0005524">
    <property type="term" value="F:ATP binding"/>
    <property type="evidence" value="ECO:0007669"/>
    <property type="project" value="UniProtKB-UniRule"/>
</dbReference>
<dbReference type="GO" id="GO:0008763">
    <property type="term" value="F:UDP-N-acetylmuramate-L-alanine ligase activity"/>
    <property type="evidence" value="ECO:0007669"/>
    <property type="project" value="UniProtKB-UniRule"/>
</dbReference>
<dbReference type="GO" id="GO:0051301">
    <property type="term" value="P:cell division"/>
    <property type="evidence" value="ECO:0007669"/>
    <property type="project" value="UniProtKB-KW"/>
</dbReference>
<dbReference type="GO" id="GO:0071555">
    <property type="term" value="P:cell wall organization"/>
    <property type="evidence" value="ECO:0007669"/>
    <property type="project" value="UniProtKB-KW"/>
</dbReference>
<dbReference type="GO" id="GO:0009252">
    <property type="term" value="P:peptidoglycan biosynthetic process"/>
    <property type="evidence" value="ECO:0007669"/>
    <property type="project" value="UniProtKB-UniRule"/>
</dbReference>
<dbReference type="GO" id="GO:0008360">
    <property type="term" value="P:regulation of cell shape"/>
    <property type="evidence" value="ECO:0007669"/>
    <property type="project" value="UniProtKB-KW"/>
</dbReference>
<dbReference type="FunFam" id="3.40.1190.10:FF:000001">
    <property type="entry name" value="UDP-N-acetylmuramate--L-alanine ligase"/>
    <property type="match status" value="1"/>
</dbReference>
<dbReference type="Gene3D" id="3.90.190.20">
    <property type="entry name" value="Mur ligase, C-terminal domain"/>
    <property type="match status" value="1"/>
</dbReference>
<dbReference type="Gene3D" id="3.40.1190.10">
    <property type="entry name" value="Mur-like, catalytic domain"/>
    <property type="match status" value="1"/>
</dbReference>
<dbReference type="Gene3D" id="3.40.50.720">
    <property type="entry name" value="NAD(P)-binding Rossmann-like Domain"/>
    <property type="match status" value="1"/>
</dbReference>
<dbReference type="HAMAP" id="MF_00046">
    <property type="entry name" value="MurC"/>
    <property type="match status" value="1"/>
</dbReference>
<dbReference type="InterPro" id="IPR036565">
    <property type="entry name" value="Mur-like_cat_sf"/>
</dbReference>
<dbReference type="InterPro" id="IPR004101">
    <property type="entry name" value="Mur_ligase_C"/>
</dbReference>
<dbReference type="InterPro" id="IPR036615">
    <property type="entry name" value="Mur_ligase_C_dom_sf"/>
</dbReference>
<dbReference type="InterPro" id="IPR013221">
    <property type="entry name" value="Mur_ligase_cen"/>
</dbReference>
<dbReference type="InterPro" id="IPR000713">
    <property type="entry name" value="Mur_ligase_N"/>
</dbReference>
<dbReference type="InterPro" id="IPR050061">
    <property type="entry name" value="MurCDEF_pg_biosynth"/>
</dbReference>
<dbReference type="InterPro" id="IPR005758">
    <property type="entry name" value="UDP-N-AcMur_Ala_ligase_MurC"/>
</dbReference>
<dbReference type="NCBIfam" id="TIGR01082">
    <property type="entry name" value="murC"/>
    <property type="match status" value="1"/>
</dbReference>
<dbReference type="PANTHER" id="PTHR43445:SF3">
    <property type="entry name" value="UDP-N-ACETYLMURAMATE--L-ALANINE LIGASE"/>
    <property type="match status" value="1"/>
</dbReference>
<dbReference type="PANTHER" id="PTHR43445">
    <property type="entry name" value="UDP-N-ACETYLMURAMATE--L-ALANINE LIGASE-RELATED"/>
    <property type="match status" value="1"/>
</dbReference>
<dbReference type="Pfam" id="PF01225">
    <property type="entry name" value="Mur_ligase"/>
    <property type="match status" value="1"/>
</dbReference>
<dbReference type="Pfam" id="PF02875">
    <property type="entry name" value="Mur_ligase_C"/>
    <property type="match status" value="1"/>
</dbReference>
<dbReference type="Pfam" id="PF08245">
    <property type="entry name" value="Mur_ligase_M"/>
    <property type="match status" value="1"/>
</dbReference>
<dbReference type="SUPFAM" id="SSF51984">
    <property type="entry name" value="MurCD N-terminal domain"/>
    <property type="match status" value="1"/>
</dbReference>
<dbReference type="SUPFAM" id="SSF53623">
    <property type="entry name" value="MurD-like peptide ligases, catalytic domain"/>
    <property type="match status" value="1"/>
</dbReference>
<dbReference type="SUPFAM" id="SSF53244">
    <property type="entry name" value="MurD-like peptide ligases, peptide-binding domain"/>
    <property type="match status" value="1"/>
</dbReference>
<feature type="chain" id="PRO_0000242554" description="UDP-N-acetylmuramate--L-alanine ligase">
    <location>
        <begin position="1"/>
        <end position="463"/>
    </location>
</feature>
<feature type="binding site" evidence="1">
    <location>
        <begin position="112"/>
        <end position="118"/>
    </location>
    <ligand>
        <name>ATP</name>
        <dbReference type="ChEBI" id="CHEBI:30616"/>
    </ligand>
</feature>
<keyword id="KW-0067">ATP-binding</keyword>
<keyword id="KW-0131">Cell cycle</keyword>
<keyword id="KW-0132">Cell division</keyword>
<keyword id="KW-0133">Cell shape</keyword>
<keyword id="KW-0961">Cell wall biogenesis/degradation</keyword>
<keyword id="KW-0963">Cytoplasm</keyword>
<keyword id="KW-0436">Ligase</keyword>
<keyword id="KW-0547">Nucleotide-binding</keyword>
<keyword id="KW-0573">Peptidoglycan synthesis</keyword>
<protein>
    <recommendedName>
        <fullName evidence="1">UDP-N-acetylmuramate--L-alanine ligase</fullName>
        <ecNumber evidence="1">6.3.2.8</ecNumber>
    </recommendedName>
    <alternativeName>
        <fullName evidence="1">UDP-N-acetylmuramoyl-L-alanine synthetase</fullName>
    </alternativeName>
</protein>